<organism>
    <name type="scientific">Bacillus licheniformis (strain ATCC 14580 / DSM 13 / JCM 2505 / CCUG 7422 / NBRC 12200 / NCIMB 9375 / NCTC 10341 / NRRL NRS-1264 / Gibson 46)</name>
    <dbReference type="NCBI Taxonomy" id="279010"/>
    <lineage>
        <taxon>Bacteria</taxon>
        <taxon>Bacillati</taxon>
        <taxon>Bacillota</taxon>
        <taxon>Bacilli</taxon>
        <taxon>Bacillales</taxon>
        <taxon>Bacillaceae</taxon>
        <taxon>Bacillus</taxon>
    </lineage>
</organism>
<gene>
    <name evidence="1" type="primary">rplU</name>
    <name type="ordered locus">BLi02923</name>
    <name type="ordered locus">BL04043</name>
</gene>
<reference key="1">
    <citation type="journal article" date="2004" name="J. Mol. Microbiol. Biotechnol.">
        <title>The complete genome sequence of Bacillus licheniformis DSM13, an organism with great industrial potential.</title>
        <authorList>
            <person name="Veith B."/>
            <person name="Herzberg C."/>
            <person name="Steckel S."/>
            <person name="Feesche J."/>
            <person name="Maurer K.H."/>
            <person name="Ehrenreich P."/>
            <person name="Baeumer S."/>
            <person name="Henne A."/>
            <person name="Liesegang H."/>
            <person name="Merkl R."/>
            <person name="Ehrenreich A."/>
            <person name="Gottschalk G."/>
        </authorList>
    </citation>
    <scope>NUCLEOTIDE SEQUENCE [LARGE SCALE GENOMIC DNA]</scope>
    <source>
        <strain>ATCC 14580 / DSM 13 / JCM 2505 / CCUG 7422 / NBRC 12200 / NCIMB 9375 / NCTC 10341 / NRRL NRS-1264 / Gibson 46</strain>
    </source>
</reference>
<reference key="2">
    <citation type="journal article" date="2004" name="Genome Biol.">
        <title>Complete genome sequence of the industrial bacterium Bacillus licheniformis and comparisons with closely related Bacillus species.</title>
        <authorList>
            <person name="Rey M.W."/>
            <person name="Ramaiya P."/>
            <person name="Nelson B.A."/>
            <person name="Brody-Karpin S.D."/>
            <person name="Zaretsky E.J."/>
            <person name="Tang M."/>
            <person name="Lopez de Leon A."/>
            <person name="Xiang H."/>
            <person name="Gusti V."/>
            <person name="Clausen I.G."/>
            <person name="Olsen P.B."/>
            <person name="Rasmussen M.D."/>
            <person name="Andersen J.T."/>
            <person name="Joergensen P.L."/>
            <person name="Larsen T.S."/>
            <person name="Sorokin A."/>
            <person name="Bolotin A."/>
            <person name="Lapidus A."/>
            <person name="Galleron N."/>
            <person name="Ehrlich S.D."/>
            <person name="Berka R.M."/>
        </authorList>
    </citation>
    <scope>NUCLEOTIDE SEQUENCE [LARGE SCALE GENOMIC DNA]</scope>
    <source>
        <strain>ATCC 14580 / DSM 13 / JCM 2505 / CCUG 7422 / NBRC 12200 / NCIMB 9375 / NCTC 10341 / NRRL NRS-1264 / Gibson 46</strain>
    </source>
</reference>
<protein>
    <recommendedName>
        <fullName evidence="1">Large ribosomal subunit protein bL21</fullName>
    </recommendedName>
    <alternativeName>
        <fullName evidence="2">50S ribosomal protein L21</fullName>
    </alternativeName>
</protein>
<comment type="function">
    <text evidence="1">This protein binds to 23S rRNA in the presence of protein L20.</text>
</comment>
<comment type="subunit">
    <text evidence="1">Part of the 50S ribosomal subunit. Contacts protein L20.</text>
</comment>
<comment type="similarity">
    <text evidence="1">Belongs to the bacterial ribosomal protein bL21 family.</text>
</comment>
<accession>Q65GM3</accession>
<accession>Q62S31</accession>
<sequence>MYAIIQTGGKQIKVEEGQTVYVEKLAAEAGETVTFDNVLFVGGENVKVGSPTVEGATVTGKVEKQGRAKKITVFKYKPKKNQHKKQGHRQPYTKVVIEKINA</sequence>
<name>RL21_BACLD</name>
<keyword id="KW-1185">Reference proteome</keyword>
<keyword id="KW-0687">Ribonucleoprotein</keyword>
<keyword id="KW-0689">Ribosomal protein</keyword>
<keyword id="KW-0694">RNA-binding</keyword>
<keyword id="KW-0699">rRNA-binding</keyword>
<proteinExistence type="inferred from homology"/>
<evidence type="ECO:0000255" key="1">
    <source>
        <dbReference type="HAMAP-Rule" id="MF_01363"/>
    </source>
</evidence>
<evidence type="ECO:0000305" key="2"/>
<feature type="chain" id="PRO_0000269281" description="Large ribosomal subunit protein bL21">
    <location>
        <begin position="1"/>
        <end position="102"/>
    </location>
</feature>
<dbReference type="EMBL" id="AE017333">
    <property type="protein sequence ID" value="AAU41791.1"/>
    <property type="molecule type" value="Genomic_DNA"/>
</dbReference>
<dbReference type="EMBL" id="CP000002">
    <property type="protein sequence ID" value="AAU24429.1"/>
    <property type="molecule type" value="Genomic_DNA"/>
</dbReference>
<dbReference type="RefSeq" id="WP_003184027.1">
    <property type="nucleotide sequence ID" value="NC_006322.1"/>
</dbReference>
<dbReference type="SMR" id="Q65GM3"/>
<dbReference type="STRING" id="279010.BL04043"/>
<dbReference type="GeneID" id="92860483"/>
<dbReference type="KEGG" id="bld:BLi02923"/>
<dbReference type="KEGG" id="bli:BL04043"/>
<dbReference type="eggNOG" id="COG0261">
    <property type="taxonomic scope" value="Bacteria"/>
</dbReference>
<dbReference type="HOGENOM" id="CLU_061463_3_2_9"/>
<dbReference type="Proteomes" id="UP000000606">
    <property type="component" value="Chromosome"/>
</dbReference>
<dbReference type="GO" id="GO:0005737">
    <property type="term" value="C:cytoplasm"/>
    <property type="evidence" value="ECO:0007669"/>
    <property type="project" value="UniProtKB-ARBA"/>
</dbReference>
<dbReference type="GO" id="GO:1990904">
    <property type="term" value="C:ribonucleoprotein complex"/>
    <property type="evidence" value="ECO:0007669"/>
    <property type="project" value="UniProtKB-KW"/>
</dbReference>
<dbReference type="GO" id="GO:0005840">
    <property type="term" value="C:ribosome"/>
    <property type="evidence" value="ECO:0007669"/>
    <property type="project" value="UniProtKB-KW"/>
</dbReference>
<dbReference type="GO" id="GO:0019843">
    <property type="term" value="F:rRNA binding"/>
    <property type="evidence" value="ECO:0007669"/>
    <property type="project" value="UniProtKB-UniRule"/>
</dbReference>
<dbReference type="GO" id="GO:0003735">
    <property type="term" value="F:structural constituent of ribosome"/>
    <property type="evidence" value="ECO:0007669"/>
    <property type="project" value="InterPro"/>
</dbReference>
<dbReference type="GO" id="GO:0006412">
    <property type="term" value="P:translation"/>
    <property type="evidence" value="ECO:0007669"/>
    <property type="project" value="UniProtKB-UniRule"/>
</dbReference>
<dbReference type="HAMAP" id="MF_01363">
    <property type="entry name" value="Ribosomal_bL21"/>
    <property type="match status" value="1"/>
</dbReference>
<dbReference type="InterPro" id="IPR028909">
    <property type="entry name" value="bL21-like"/>
</dbReference>
<dbReference type="InterPro" id="IPR036164">
    <property type="entry name" value="bL21-like_sf"/>
</dbReference>
<dbReference type="InterPro" id="IPR001787">
    <property type="entry name" value="Ribosomal_bL21"/>
</dbReference>
<dbReference type="InterPro" id="IPR018258">
    <property type="entry name" value="Ribosomal_bL21_CS"/>
</dbReference>
<dbReference type="NCBIfam" id="TIGR00061">
    <property type="entry name" value="L21"/>
    <property type="match status" value="1"/>
</dbReference>
<dbReference type="PANTHER" id="PTHR21349">
    <property type="entry name" value="50S RIBOSOMAL PROTEIN L21"/>
    <property type="match status" value="1"/>
</dbReference>
<dbReference type="PANTHER" id="PTHR21349:SF0">
    <property type="entry name" value="LARGE RIBOSOMAL SUBUNIT PROTEIN BL21M"/>
    <property type="match status" value="1"/>
</dbReference>
<dbReference type="Pfam" id="PF00829">
    <property type="entry name" value="Ribosomal_L21p"/>
    <property type="match status" value="1"/>
</dbReference>
<dbReference type="SUPFAM" id="SSF141091">
    <property type="entry name" value="L21p-like"/>
    <property type="match status" value="1"/>
</dbReference>
<dbReference type="PROSITE" id="PS01169">
    <property type="entry name" value="RIBOSOMAL_L21"/>
    <property type="match status" value="1"/>
</dbReference>